<protein>
    <recommendedName>
        <fullName>Hemoglobin subunit alpha-D</fullName>
    </recommendedName>
    <alternativeName>
        <fullName>Alpha-D-globin</fullName>
    </alternativeName>
    <alternativeName>
        <fullName>Hemoglobin alpha-D chain</fullName>
    </alternativeName>
</protein>
<evidence type="ECO:0000255" key="1">
    <source>
        <dbReference type="PROSITE-ProRule" id="PRU00238"/>
    </source>
</evidence>
<keyword id="KW-0349">Heme</keyword>
<keyword id="KW-0408">Iron</keyword>
<keyword id="KW-0479">Metal-binding</keyword>
<keyword id="KW-0561">Oxygen transport</keyword>
<keyword id="KW-0813">Transport</keyword>
<reference key="1">
    <citation type="journal article" date="1984" name="J. Mol. Appl. Genet.">
        <title>Nucleotide sequences for the duck globin mRNAs.</title>
        <authorList>
            <person name="Frankis R.C."/>
            <person name="Paddock G.V."/>
        </authorList>
    </citation>
    <scope>NUCLEOTIDE SEQUENCE [MRNA]</scope>
    <source>
        <strain>Pekin breed</strain>
    </source>
</reference>
<reference key="2">
    <citation type="journal article" date="1983" name="Mol. Biol. Rep.">
        <title>Determination of the primary sequence of the duck alpha D globin mRNA and comparison of all adult duck and chick globin mRNA sequences.</title>
        <authorList>
            <person name="Ben-Tahar S."/>
            <person name="Scherrer K."/>
        </authorList>
    </citation>
    <scope>NUCLEOTIDE SEQUENCE [MRNA] OF 7-141</scope>
    <source>
        <strain>Pekin breed</strain>
    </source>
</reference>
<accession>P04442</accession>
<sequence length="141" mass="15746">MLTAEDKKLITQLWEKVAGHQEEFGSEALQRMFLAYPQTKTYFPHFDLHPGSEQVRGHGKKVAAALGNAVKSLDNLSQALSELSNLHAYNLRVDPVNFKLLAQCFQVVLAAHLGKDYSPEMHAAFDKFMSAVAAVLAEKYR</sequence>
<dbReference type="EMBL" id="M16787">
    <property type="protein sequence ID" value="AAA49149.1"/>
    <property type="molecule type" value="mRNA"/>
</dbReference>
<dbReference type="EMBL" id="K01942">
    <property type="protein sequence ID" value="AAA49220.1"/>
    <property type="molecule type" value="mRNA"/>
</dbReference>
<dbReference type="PIR" id="S13971">
    <property type="entry name" value="HADKDD"/>
</dbReference>
<dbReference type="RefSeq" id="NP_001297719.1">
    <property type="nucleotide sequence ID" value="NM_001310790.1"/>
</dbReference>
<dbReference type="SMR" id="P04442"/>
<dbReference type="Ensembl" id="ENSAPLT00020028994.1">
    <property type="protein sequence ID" value="ENSAPLP00020026923.1"/>
    <property type="gene ID" value="ENSAPLG00020018296.1"/>
</dbReference>
<dbReference type="GeneID" id="101800520"/>
<dbReference type="KEGG" id="apla:101800520"/>
<dbReference type="OrthoDB" id="8751793at2759"/>
<dbReference type="Proteomes" id="UP000694400">
    <property type="component" value="Chromosome 15"/>
</dbReference>
<dbReference type="GO" id="GO:0072562">
    <property type="term" value="C:blood microparticle"/>
    <property type="evidence" value="ECO:0007669"/>
    <property type="project" value="TreeGrafter"/>
</dbReference>
<dbReference type="GO" id="GO:0031838">
    <property type="term" value="C:haptoglobin-hemoglobin complex"/>
    <property type="evidence" value="ECO:0007669"/>
    <property type="project" value="TreeGrafter"/>
</dbReference>
<dbReference type="GO" id="GO:0005833">
    <property type="term" value="C:hemoglobin complex"/>
    <property type="evidence" value="ECO:0007669"/>
    <property type="project" value="InterPro"/>
</dbReference>
<dbReference type="GO" id="GO:0031720">
    <property type="term" value="F:haptoglobin binding"/>
    <property type="evidence" value="ECO:0007669"/>
    <property type="project" value="TreeGrafter"/>
</dbReference>
<dbReference type="GO" id="GO:0020037">
    <property type="term" value="F:heme binding"/>
    <property type="evidence" value="ECO:0007669"/>
    <property type="project" value="InterPro"/>
</dbReference>
<dbReference type="GO" id="GO:0005506">
    <property type="term" value="F:iron ion binding"/>
    <property type="evidence" value="ECO:0007669"/>
    <property type="project" value="InterPro"/>
</dbReference>
<dbReference type="GO" id="GO:0043177">
    <property type="term" value="F:organic acid binding"/>
    <property type="evidence" value="ECO:0007669"/>
    <property type="project" value="TreeGrafter"/>
</dbReference>
<dbReference type="GO" id="GO:0019825">
    <property type="term" value="F:oxygen binding"/>
    <property type="evidence" value="ECO:0007669"/>
    <property type="project" value="InterPro"/>
</dbReference>
<dbReference type="GO" id="GO:0005344">
    <property type="term" value="F:oxygen carrier activity"/>
    <property type="evidence" value="ECO:0007669"/>
    <property type="project" value="UniProtKB-KW"/>
</dbReference>
<dbReference type="GO" id="GO:0004601">
    <property type="term" value="F:peroxidase activity"/>
    <property type="evidence" value="ECO:0007669"/>
    <property type="project" value="TreeGrafter"/>
</dbReference>
<dbReference type="GO" id="GO:0042744">
    <property type="term" value="P:hydrogen peroxide catabolic process"/>
    <property type="evidence" value="ECO:0007669"/>
    <property type="project" value="TreeGrafter"/>
</dbReference>
<dbReference type="CDD" id="cd08927">
    <property type="entry name" value="Hb-alpha-like"/>
    <property type="match status" value="1"/>
</dbReference>
<dbReference type="FunFam" id="1.10.490.10:FF:000002">
    <property type="entry name" value="Hemoglobin subunit alpha"/>
    <property type="match status" value="1"/>
</dbReference>
<dbReference type="Gene3D" id="1.10.490.10">
    <property type="entry name" value="Globins"/>
    <property type="match status" value="1"/>
</dbReference>
<dbReference type="InterPro" id="IPR000971">
    <property type="entry name" value="Globin"/>
</dbReference>
<dbReference type="InterPro" id="IPR009050">
    <property type="entry name" value="Globin-like_sf"/>
</dbReference>
<dbReference type="InterPro" id="IPR012292">
    <property type="entry name" value="Globin/Proto"/>
</dbReference>
<dbReference type="InterPro" id="IPR002338">
    <property type="entry name" value="Hemoglobin_a-typ"/>
</dbReference>
<dbReference type="InterPro" id="IPR050056">
    <property type="entry name" value="Hemoglobin_oxygen_transport"/>
</dbReference>
<dbReference type="InterPro" id="IPR002340">
    <property type="entry name" value="Hemoglobin_zeta"/>
</dbReference>
<dbReference type="PANTHER" id="PTHR11442">
    <property type="entry name" value="HEMOGLOBIN FAMILY MEMBER"/>
    <property type="match status" value="1"/>
</dbReference>
<dbReference type="PANTHER" id="PTHR11442:SF41">
    <property type="entry name" value="HEMOGLOBIN SUBUNIT ZETA"/>
    <property type="match status" value="1"/>
</dbReference>
<dbReference type="Pfam" id="PF00042">
    <property type="entry name" value="Globin"/>
    <property type="match status" value="1"/>
</dbReference>
<dbReference type="PRINTS" id="PR00612">
    <property type="entry name" value="ALPHAHAEM"/>
</dbReference>
<dbReference type="PRINTS" id="PR00816">
    <property type="entry name" value="ZETAHAEM"/>
</dbReference>
<dbReference type="SUPFAM" id="SSF46458">
    <property type="entry name" value="Globin-like"/>
    <property type="match status" value="1"/>
</dbReference>
<dbReference type="PROSITE" id="PS01033">
    <property type="entry name" value="GLOBIN"/>
    <property type="match status" value="1"/>
</dbReference>
<comment type="function">
    <text>Involved in oxygen transport from the lung to the various peripheral tissues.</text>
</comment>
<comment type="subunit">
    <text>Heterotetramer of two alpha-D chains and two beta chains.</text>
</comment>
<comment type="tissue specificity">
    <text>Red blood cells.</text>
</comment>
<comment type="developmental stage">
    <text>In birds, the alpha-D chain occurs in a minor hemoglobin component, called hemoglobin d, which is expressed in late embryonic and adult life.</text>
</comment>
<comment type="similarity">
    <text evidence="1">Belongs to the globin family.</text>
</comment>
<organism>
    <name type="scientific">Anas platyrhynchos</name>
    <name type="common">Mallard</name>
    <name type="synonym">Anas boschas</name>
    <dbReference type="NCBI Taxonomy" id="8839"/>
    <lineage>
        <taxon>Eukaryota</taxon>
        <taxon>Metazoa</taxon>
        <taxon>Chordata</taxon>
        <taxon>Craniata</taxon>
        <taxon>Vertebrata</taxon>
        <taxon>Euteleostomi</taxon>
        <taxon>Archelosauria</taxon>
        <taxon>Archosauria</taxon>
        <taxon>Dinosauria</taxon>
        <taxon>Saurischia</taxon>
        <taxon>Theropoda</taxon>
        <taxon>Coelurosauria</taxon>
        <taxon>Aves</taxon>
        <taxon>Neognathae</taxon>
        <taxon>Galloanserae</taxon>
        <taxon>Anseriformes</taxon>
        <taxon>Anatidae</taxon>
        <taxon>Anatinae</taxon>
        <taxon>Anas</taxon>
    </lineage>
</organism>
<feature type="chain" id="PRO_0000052816" description="Hemoglobin subunit alpha-D">
    <location>
        <begin position="1"/>
        <end position="141"/>
    </location>
</feature>
<feature type="domain" description="Globin" evidence="1">
    <location>
        <begin position="1"/>
        <end position="141"/>
    </location>
</feature>
<feature type="binding site" description="distal binding residue">
    <location>
        <position position="58"/>
    </location>
    <ligand>
        <name>heme b</name>
        <dbReference type="ChEBI" id="CHEBI:60344"/>
    </ligand>
    <ligandPart>
        <name>Fe</name>
        <dbReference type="ChEBI" id="CHEBI:18248"/>
    </ligandPart>
</feature>
<feature type="binding site" description="proximal binding residue">
    <location>
        <position position="87"/>
    </location>
    <ligand>
        <name>heme b</name>
        <dbReference type="ChEBI" id="CHEBI:60344"/>
    </ligand>
    <ligandPart>
        <name>Fe</name>
        <dbReference type="ChEBI" id="CHEBI:18248"/>
    </ligandPart>
</feature>
<gene>
    <name type="primary">HBAD</name>
</gene>
<name>HBAD_ANAPL</name>
<proteinExistence type="evidence at transcript level"/>